<evidence type="ECO:0000250" key="1">
    <source>
        <dbReference type="UniProtKB" id="P42766"/>
    </source>
</evidence>
<evidence type="ECO:0000256" key="2">
    <source>
        <dbReference type="SAM" id="MobiDB-lite"/>
    </source>
</evidence>
<evidence type="ECO:0000305" key="3"/>
<sequence length="123" mass="14553">MAKIKARDLRGKKKEELLKQLDDLKVELSQLRVAKVTGGAASKLSKIRVVRKSIARVLTVINQTQKENLRKFYKGKKYKPLDLRPKKTRAMRRRLTKHEEKLKTKKQQRKERLYPLRKYAVKA</sequence>
<gene>
    <name type="primary">Rpl35</name>
</gene>
<proteinExistence type="evidence at protein level"/>
<name>RL35_RAT</name>
<feature type="chain" id="PRO_0000130535" description="Large ribosomal subunit protein uL29">
    <location>
        <begin position="1"/>
        <end position="123"/>
    </location>
</feature>
<feature type="region of interest" description="Disordered" evidence="2">
    <location>
        <begin position="100"/>
        <end position="123"/>
    </location>
</feature>
<feature type="modified residue" description="N6-acetyllysine" evidence="1">
    <location>
        <position position="19"/>
    </location>
</feature>
<feature type="modified residue" description="Phosphoserine" evidence="1">
    <location>
        <position position="29"/>
    </location>
</feature>
<feature type="modified residue" description="N6-acetyllysine" evidence="1">
    <location>
        <position position="43"/>
    </location>
</feature>
<feature type="cross-link" description="Glycyl lysine isopeptide (Lys-Gly) (interchain with G-Cter in SUMO2)" evidence="1">
    <location>
        <position position="25"/>
    </location>
</feature>
<reference key="1">
    <citation type="journal article" date="1990" name="Biochem. Biophys. Res. Commun.">
        <title>The primary structure of rat ribosomal protein L35.</title>
        <authorList>
            <person name="Suzuki K."/>
            <person name="Olvera J."/>
            <person name="Wool I.G."/>
        </authorList>
    </citation>
    <scope>NUCLEOTIDE SEQUENCE [MRNA]</scope>
    <scope>PARTIAL PROTEIN SEQUENCE</scope>
    <source>
        <strain>Sprague-Dawley</strain>
        <tissue>Liver</tissue>
    </source>
</reference>
<reference key="2">
    <citation type="journal article" date="2004" name="Genome Res.">
        <title>The status, quality, and expansion of the NIH full-length cDNA project: the Mammalian Gene Collection (MGC).</title>
        <authorList>
            <consortium name="The MGC Project Team"/>
        </authorList>
    </citation>
    <scope>NUCLEOTIDE SEQUENCE [LARGE SCALE MRNA]</scope>
    <source>
        <tissue>Pituitary</tissue>
    </source>
</reference>
<accession>P17078</accession>
<comment type="function">
    <text evidence="1">Component of the large ribosomal subunit. The ribosome is a large ribonucleoprotein complex responsible for the synthesis of proteins in the cell.</text>
</comment>
<comment type="subunit">
    <text evidence="1">Component of the large ribosomal subunit.</text>
</comment>
<comment type="subcellular location">
    <subcellularLocation>
        <location evidence="1">Cytoplasm</location>
    </subcellularLocation>
</comment>
<comment type="similarity">
    <text evidence="3">Belongs to the universal ribosomal protein uL29 family.</text>
</comment>
<keyword id="KW-0002">3D-structure</keyword>
<keyword id="KW-0007">Acetylation</keyword>
<keyword id="KW-0963">Cytoplasm</keyword>
<keyword id="KW-0903">Direct protein sequencing</keyword>
<keyword id="KW-1017">Isopeptide bond</keyword>
<keyword id="KW-0597">Phosphoprotein</keyword>
<keyword id="KW-1185">Reference proteome</keyword>
<keyword id="KW-0687">Ribonucleoprotein</keyword>
<keyword id="KW-0689">Ribosomal protein</keyword>
<keyword id="KW-0832">Ubl conjugation</keyword>
<organism>
    <name type="scientific">Rattus norvegicus</name>
    <name type="common">Rat</name>
    <dbReference type="NCBI Taxonomy" id="10116"/>
    <lineage>
        <taxon>Eukaryota</taxon>
        <taxon>Metazoa</taxon>
        <taxon>Chordata</taxon>
        <taxon>Craniata</taxon>
        <taxon>Vertebrata</taxon>
        <taxon>Euteleostomi</taxon>
        <taxon>Mammalia</taxon>
        <taxon>Eutheria</taxon>
        <taxon>Euarchontoglires</taxon>
        <taxon>Glires</taxon>
        <taxon>Rodentia</taxon>
        <taxon>Myomorpha</taxon>
        <taxon>Muroidea</taxon>
        <taxon>Muridae</taxon>
        <taxon>Murinae</taxon>
        <taxon>Rattus</taxon>
    </lineage>
</organism>
<protein>
    <recommendedName>
        <fullName evidence="3">Large ribosomal subunit protein uL29</fullName>
    </recommendedName>
    <alternativeName>
        <fullName>60S ribosomal protein L35</fullName>
    </alternativeName>
</protein>
<dbReference type="EMBL" id="X51705">
    <property type="protein sequence ID" value="CAA36001.1"/>
    <property type="molecule type" value="mRNA"/>
</dbReference>
<dbReference type="EMBL" id="BC058499">
    <property type="protein sequence ID" value="AAH58499.1"/>
    <property type="molecule type" value="mRNA"/>
</dbReference>
<dbReference type="PIR" id="A34571">
    <property type="entry name" value="R5RT35"/>
</dbReference>
<dbReference type="RefSeq" id="NP_997676.1">
    <property type="nucleotide sequence ID" value="NM_212511.2"/>
</dbReference>
<dbReference type="PDB" id="7QGG">
    <property type="method" value="EM"/>
    <property type="resolution" value="2.86 A"/>
    <property type="chains" value="i=1-123"/>
</dbReference>
<dbReference type="PDBsum" id="7QGG"/>
<dbReference type="EMDB" id="EMD-13954"/>
<dbReference type="SMR" id="P17078"/>
<dbReference type="FunCoup" id="P17078">
    <property type="interactions" value="2567"/>
</dbReference>
<dbReference type="IntAct" id="P17078">
    <property type="interactions" value="7"/>
</dbReference>
<dbReference type="STRING" id="10116.ENSRNOP00000019162"/>
<dbReference type="iPTMnet" id="P17078"/>
<dbReference type="PhosphoSitePlus" id="P17078"/>
<dbReference type="PaxDb" id="10116-ENSRNOP00000019162"/>
<dbReference type="GeneID" id="296709"/>
<dbReference type="KEGG" id="rno:296709"/>
<dbReference type="UCSC" id="RGD:1303007">
    <property type="organism name" value="rat"/>
</dbReference>
<dbReference type="AGR" id="RGD:1303007"/>
<dbReference type="CTD" id="11224"/>
<dbReference type="RGD" id="1303007">
    <property type="gene designation" value="Rpl35"/>
</dbReference>
<dbReference type="VEuPathDB" id="HostDB:ENSRNOG00000014272"/>
<dbReference type="eggNOG" id="KOG3436">
    <property type="taxonomic scope" value="Eukaryota"/>
</dbReference>
<dbReference type="HOGENOM" id="CLU_110381_1_1_1"/>
<dbReference type="InParanoid" id="P17078"/>
<dbReference type="OrthoDB" id="88264at9989"/>
<dbReference type="PhylomeDB" id="P17078"/>
<dbReference type="TreeFam" id="TF314951"/>
<dbReference type="Reactome" id="R-RNO-156827">
    <property type="pathway name" value="L13a-mediated translational silencing of Ceruloplasmin expression"/>
</dbReference>
<dbReference type="Reactome" id="R-RNO-1799339">
    <property type="pathway name" value="SRP-dependent cotranslational protein targeting to membrane"/>
</dbReference>
<dbReference type="Reactome" id="R-RNO-6791226">
    <property type="pathway name" value="Major pathway of rRNA processing in the nucleolus and cytosol"/>
</dbReference>
<dbReference type="Reactome" id="R-RNO-72689">
    <property type="pathway name" value="Formation of a pool of free 40S subunits"/>
</dbReference>
<dbReference type="Reactome" id="R-RNO-72706">
    <property type="pathway name" value="GTP hydrolysis and joining of the 60S ribosomal subunit"/>
</dbReference>
<dbReference type="Reactome" id="R-RNO-975956">
    <property type="pathway name" value="Nonsense Mediated Decay (NMD) independent of the Exon Junction Complex (EJC)"/>
</dbReference>
<dbReference type="Reactome" id="R-RNO-975957">
    <property type="pathway name" value="Nonsense Mediated Decay (NMD) enhanced by the Exon Junction Complex (EJC)"/>
</dbReference>
<dbReference type="PRO" id="PR:P17078"/>
<dbReference type="Proteomes" id="UP000002494">
    <property type="component" value="Chromosome 3"/>
</dbReference>
<dbReference type="Bgee" id="ENSRNOG00000014272">
    <property type="expression patterns" value="Expressed in ovary and 20 other cell types or tissues"/>
</dbReference>
<dbReference type="GO" id="GO:0005737">
    <property type="term" value="C:cytoplasm"/>
    <property type="evidence" value="ECO:0000266"/>
    <property type="project" value="RGD"/>
</dbReference>
<dbReference type="GO" id="GO:0098556">
    <property type="term" value="C:cytoplasmic side of rough endoplasmic reticulum membrane"/>
    <property type="evidence" value="ECO:0000266"/>
    <property type="project" value="RGD"/>
</dbReference>
<dbReference type="GO" id="GO:0022625">
    <property type="term" value="C:cytosolic large ribosomal subunit"/>
    <property type="evidence" value="ECO:0000314"/>
    <property type="project" value="RGD"/>
</dbReference>
<dbReference type="GO" id="GO:0022626">
    <property type="term" value="C:cytosolic ribosome"/>
    <property type="evidence" value="ECO:0000266"/>
    <property type="project" value="RGD"/>
</dbReference>
<dbReference type="GO" id="GO:0015934">
    <property type="term" value="C:large ribosomal subunit"/>
    <property type="evidence" value="ECO:0000266"/>
    <property type="project" value="RGD"/>
</dbReference>
<dbReference type="GO" id="GO:0045202">
    <property type="term" value="C:synapse"/>
    <property type="evidence" value="ECO:0000266"/>
    <property type="project" value="RGD"/>
</dbReference>
<dbReference type="GO" id="GO:0003729">
    <property type="term" value="F:mRNA binding"/>
    <property type="evidence" value="ECO:0000318"/>
    <property type="project" value="GO_Central"/>
</dbReference>
<dbReference type="GO" id="GO:0043021">
    <property type="term" value="F:ribonucleoprotein complex binding"/>
    <property type="evidence" value="ECO:0000314"/>
    <property type="project" value="RGD"/>
</dbReference>
<dbReference type="GO" id="GO:0003735">
    <property type="term" value="F:structural constituent of ribosome"/>
    <property type="evidence" value="ECO:0000266"/>
    <property type="project" value="RGD"/>
</dbReference>
<dbReference type="GO" id="GO:0071493">
    <property type="term" value="P:cellular response to UV-B"/>
    <property type="evidence" value="ECO:0000270"/>
    <property type="project" value="RGD"/>
</dbReference>
<dbReference type="GO" id="GO:0000463">
    <property type="term" value="P:maturation of LSU-rRNA from tricistronic rRNA transcript (SSU-rRNA, 5.8S rRNA, LSU-rRNA)"/>
    <property type="evidence" value="ECO:0000318"/>
    <property type="project" value="GO_Central"/>
</dbReference>
<dbReference type="GO" id="GO:0006412">
    <property type="term" value="P:translation"/>
    <property type="evidence" value="ECO:0007669"/>
    <property type="project" value="InterPro"/>
</dbReference>
<dbReference type="CDD" id="cd00427">
    <property type="entry name" value="Ribosomal_L29_HIP"/>
    <property type="match status" value="1"/>
</dbReference>
<dbReference type="FunFam" id="1.10.287.310:FF:000002">
    <property type="entry name" value="60S ribosomal protein L35"/>
    <property type="match status" value="1"/>
</dbReference>
<dbReference type="FunFam" id="6.10.250.3450:FF:000001">
    <property type="entry name" value="60S ribosomal protein L35"/>
    <property type="match status" value="1"/>
</dbReference>
<dbReference type="Gene3D" id="1.10.287.310">
    <property type="match status" value="1"/>
</dbReference>
<dbReference type="Gene3D" id="6.10.250.3450">
    <property type="match status" value="1"/>
</dbReference>
<dbReference type="HAMAP" id="MF_00374">
    <property type="entry name" value="Ribosomal_uL29"/>
    <property type="match status" value="1"/>
</dbReference>
<dbReference type="InterPro" id="IPR001854">
    <property type="entry name" value="Ribosomal_uL29"/>
</dbReference>
<dbReference type="InterPro" id="IPR018254">
    <property type="entry name" value="Ribosomal_uL29_CS"/>
</dbReference>
<dbReference type="InterPro" id="IPR045059">
    <property type="entry name" value="Ribosomal_uL29_euk"/>
</dbReference>
<dbReference type="InterPro" id="IPR036049">
    <property type="entry name" value="Ribosomal_uL29_sf"/>
</dbReference>
<dbReference type="NCBIfam" id="TIGR00012">
    <property type="entry name" value="L29"/>
    <property type="match status" value="1"/>
</dbReference>
<dbReference type="PANTHER" id="PTHR45722">
    <property type="entry name" value="60S RIBOSOMAL PROTEIN L35"/>
    <property type="match status" value="1"/>
</dbReference>
<dbReference type="PANTHER" id="PTHR45722:SF33">
    <property type="entry name" value="LARGE RIBOSOMAL SUBUNIT PROTEIN UL29"/>
    <property type="match status" value="1"/>
</dbReference>
<dbReference type="Pfam" id="PF00831">
    <property type="entry name" value="Ribosomal_L29"/>
    <property type="match status" value="1"/>
</dbReference>
<dbReference type="SUPFAM" id="SSF46561">
    <property type="entry name" value="Ribosomal protein L29 (L29p)"/>
    <property type="match status" value="1"/>
</dbReference>
<dbReference type="PROSITE" id="PS00579">
    <property type="entry name" value="RIBOSOMAL_L29"/>
    <property type="match status" value="1"/>
</dbReference>